<geneLocation type="chloroplast"/>
<dbReference type="EMBL" id="AJ627251">
    <property type="protein sequence ID" value="CAF28632.1"/>
    <property type="molecule type" value="Genomic_DNA"/>
</dbReference>
<dbReference type="RefSeq" id="YP_053192.1">
    <property type="nucleotide sequence ID" value="NC_006050.1"/>
</dbReference>
<dbReference type="SMR" id="Q6EW14"/>
<dbReference type="GeneID" id="2896136"/>
<dbReference type="GO" id="GO:0009507">
    <property type="term" value="C:chloroplast"/>
    <property type="evidence" value="ECO:0007669"/>
    <property type="project" value="UniProtKB-SubCell"/>
</dbReference>
<dbReference type="GO" id="GO:0005762">
    <property type="term" value="C:mitochondrial large ribosomal subunit"/>
    <property type="evidence" value="ECO:0007669"/>
    <property type="project" value="TreeGrafter"/>
</dbReference>
<dbReference type="GO" id="GO:0019843">
    <property type="term" value="F:rRNA binding"/>
    <property type="evidence" value="ECO:0007669"/>
    <property type="project" value="InterPro"/>
</dbReference>
<dbReference type="GO" id="GO:0003735">
    <property type="term" value="F:structural constituent of ribosome"/>
    <property type="evidence" value="ECO:0007669"/>
    <property type="project" value="InterPro"/>
</dbReference>
<dbReference type="GO" id="GO:0032543">
    <property type="term" value="P:mitochondrial translation"/>
    <property type="evidence" value="ECO:0007669"/>
    <property type="project" value="TreeGrafter"/>
</dbReference>
<dbReference type="CDD" id="cd01433">
    <property type="entry name" value="Ribosomal_L16_L10e"/>
    <property type="match status" value="1"/>
</dbReference>
<dbReference type="FunFam" id="3.90.1170.10:FF:000001">
    <property type="entry name" value="50S ribosomal protein L16"/>
    <property type="match status" value="1"/>
</dbReference>
<dbReference type="Gene3D" id="3.90.1170.10">
    <property type="entry name" value="Ribosomal protein L10e/L16"/>
    <property type="match status" value="1"/>
</dbReference>
<dbReference type="HAMAP" id="MF_01342">
    <property type="entry name" value="Ribosomal_uL16"/>
    <property type="match status" value="1"/>
</dbReference>
<dbReference type="InterPro" id="IPR047873">
    <property type="entry name" value="Ribosomal_uL16"/>
</dbReference>
<dbReference type="InterPro" id="IPR000114">
    <property type="entry name" value="Ribosomal_uL16_bact-type"/>
</dbReference>
<dbReference type="InterPro" id="IPR020798">
    <property type="entry name" value="Ribosomal_uL16_CS"/>
</dbReference>
<dbReference type="InterPro" id="IPR016180">
    <property type="entry name" value="Ribosomal_uL16_dom"/>
</dbReference>
<dbReference type="InterPro" id="IPR036920">
    <property type="entry name" value="Ribosomal_uL16_sf"/>
</dbReference>
<dbReference type="NCBIfam" id="TIGR01164">
    <property type="entry name" value="rplP_bact"/>
    <property type="match status" value="1"/>
</dbReference>
<dbReference type="PANTHER" id="PTHR12220">
    <property type="entry name" value="50S/60S RIBOSOMAL PROTEIN L16"/>
    <property type="match status" value="1"/>
</dbReference>
<dbReference type="PANTHER" id="PTHR12220:SF13">
    <property type="entry name" value="LARGE RIBOSOMAL SUBUNIT PROTEIN UL16M"/>
    <property type="match status" value="1"/>
</dbReference>
<dbReference type="Pfam" id="PF00252">
    <property type="entry name" value="Ribosomal_L16"/>
    <property type="match status" value="1"/>
</dbReference>
<dbReference type="PRINTS" id="PR00060">
    <property type="entry name" value="RIBOSOMALL16"/>
</dbReference>
<dbReference type="SUPFAM" id="SSF54686">
    <property type="entry name" value="Ribosomal protein L16p/L10e"/>
    <property type="match status" value="1"/>
</dbReference>
<dbReference type="PROSITE" id="PS00586">
    <property type="entry name" value="RIBOSOMAL_L16_1"/>
    <property type="match status" value="1"/>
</dbReference>
<dbReference type="PROSITE" id="PS00701">
    <property type="entry name" value="RIBOSOMAL_L16_2"/>
    <property type="match status" value="1"/>
</dbReference>
<accession>Q6EW14</accession>
<protein>
    <recommendedName>
        <fullName evidence="1">Large ribosomal subunit protein uL16c</fullName>
    </recommendedName>
    <alternativeName>
        <fullName evidence="2">50S ribosomal protein L16, chloroplastic</fullName>
    </alternativeName>
</protein>
<gene>
    <name evidence="1" type="primary">rpl16</name>
</gene>
<organism>
    <name type="scientific">Nymphaea alba</name>
    <name type="common">White water-lily</name>
    <name type="synonym">Castalia alba</name>
    <dbReference type="NCBI Taxonomy" id="34301"/>
    <lineage>
        <taxon>Eukaryota</taxon>
        <taxon>Viridiplantae</taxon>
        <taxon>Streptophyta</taxon>
        <taxon>Embryophyta</taxon>
        <taxon>Tracheophyta</taxon>
        <taxon>Spermatophyta</taxon>
        <taxon>Magnoliopsida</taxon>
        <taxon>Nymphaeales</taxon>
        <taxon>Nymphaeaceae</taxon>
        <taxon>Nymphaea</taxon>
    </lineage>
</organism>
<comment type="subunit">
    <text evidence="1">Part of the 50S ribosomal subunit.</text>
</comment>
<comment type="subcellular location">
    <subcellularLocation>
        <location>Plastid</location>
        <location>Chloroplast</location>
    </subcellularLocation>
</comment>
<comment type="similarity">
    <text evidence="1">Belongs to the universal ribosomal protein uL16 family.</text>
</comment>
<sequence>MLSPKRTRFRKQHRGRMKGVSYRGNRICFGRYALQALEPAWITSRQIEAGRRAISRYARRGGKIWVRIFPDKPVTLRPAETRMGSGKGSPEYWVSVVKPDRILYEMGGVSETVARAAMEIAARKMPIRTKFVIAE</sequence>
<evidence type="ECO:0000255" key="1">
    <source>
        <dbReference type="HAMAP-Rule" id="MF_01342"/>
    </source>
</evidence>
<evidence type="ECO:0000305" key="2"/>
<name>RK16_NYMAL</name>
<keyword id="KW-0150">Chloroplast</keyword>
<keyword id="KW-0934">Plastid</keyword>
<keyword id="KW-0687">Ribonucleoprotein</keyword>
<keyword id="KW-0689">Ribosomal protein</keyword>
<proteinExistence type="inferred from homology"/>
<feature type="chain" id="PRO_0000062295" description="Large ribosomal subunit protein uL16c">
    <location>
        <begin position="1"/>
        <end position="135"/>
    </location>
</feature>
<reference key="1">
    <citation type="journal article" date="2004" name="Mol. Biol. Evol.">
        <title>The chloroplast genome of Nymphaea alba: whole-genome analyses and the problem of identifying the most basal angiosperm.</title>
        <authorList>
            <person name="Goremykin V.V."/>
            <person name="Hirsch-Ernst K.I."/>
            <person name="Woelfl S."/>
            <person name="Hellwig F.H."/>
        </authorList>
    </citation>
    <scope>NUCLEOTIDE SEQUENCE [LARGE SCALE GENOMIC DNA]</scope>
</reference>